<organism>
    <name type="scientific">Renibacterium salmoninarum (strain ATCC 33209 / DSM 20767 / JCM 11484 / NBRC 15589 / NCIMB 2235)</name>
    <dbReference type="NCBI Taxonomy" id="288705"/>
    <lineage>
        <taxon>Bacteria</taxon>
        <taxon>Bacillati</taxon>
        <taxon>Actinomycetota</taxon>
        <taxon>Actinomycetes</taxon>
        <taxon>Micrococcales</taxon>
        <taxon>Micrococcaceae</taxon>
        <taxon>Renibacterium</taxon>
    </lineage>
</organism>
<name>UVRC_RENSM</name>
<sequence>MANPASYRPKTGEIPTDPGVYRFRDEHGRVIYVGKAKNLRSRLTSYFANPVTLLPKTFAMVHTATSVQWTIVGSELEALQLEYTWIKEFAPRYNLAFRDDKSYPYLAVTMGEEFPRVQVMRGERRKGTRYFGPFTAGAIRETVDTLLRVFPVRTCSPSTFKRAQQSGRPCLLGYIDKCAVPCVGRVSAEEHRTLADEFCAFMGGEAKRFIGTLEKQMAEAVAELDYERAARLRDDVIALRKVFERNAVVLAEDTSADIFAVHQDELEAAVQVFNVRSGRIRGQRGWVVEKVEDLVPAELIEHLLQQVYGDERADEDRIPRQILVPELPANVEQLTEWLSGLRGAKVEIKVPQRGDKAALMETVALNAEQAMKLHKSKRAGDLTQRSLALRELQDALDLPLPLLRIECYDISHVQGTNVVASMVVVEDGIAKKSEYRRFSITGDAARDDTASMYDVITRRFRNYLQEQQDRAEALTRPVEFEISDAAETAPKSKFAYPPNLVVVDGGPPQVAATSRALADLGITDVAVIGLAKRLEEVWLPEDDFPVILPRTSQGLYLLQRIRDEAHRFAISFHRQKRGKSMTASLLDGVPGLGESKQKALLKHFGSVKKLQSADVSQISEVKGIGPVLAEAVRSALESVDAQPAINMATGEILES</sequence>
<gene>
    <name evidence="1" type="primary">uvrC</name>
    <name type="ordered locus">RSal33209_2276</name>
</gene>
<comment type="function">
    <text evidence="1">The UvrABC repair system catalyzes the recognition and processing of DNA lesions. UvrC both incises the 5' and 3' sides of the lesion. The N-terminal half is responsible for the 3' incision and the C-terminal half is responsible for the 5' incision.</text>
</comment>
<comment type="subunit">
    <text evidence="1">Interacts with UvrB in an incision complex.</text>
</comment>
<comment type="subcellular location">
    <subcellularLocation>
        <location evidence="1">Cytoplasm</location>
    </subcellularLocation>
</comment>
<comment type="similarity">
    <text evidence="1">Belongs to the UvrC family.</text>
</comment>
<proteinExistence type="inferred from homology"/>
<accession>A9WT69</accession>
<evidence type="ECO:0000255" key="1">
    <source>
        <dbReference type="HAMAP-Rule" id="MF_00203"/>
    </source>
</evidence>
<reference key="1">
    <citation type="journal article" date="2008" name="J. Bacteriol.">
        <title>Genome sequence of the fish pathogen Renibacterium salmoninarum suggests reductive evolution away from an environmental Arthrobacter ancestor.</title>
        <authorList>
            <person name="Wiens G.D."/>
            <person name="Rockey D.D."/>
            <person name="Wu Z."/>
            <person name="Chang J."/>
            <person name="Levy R."/>
            <person name="Crane S."/>
            <person name="Chen D.S."/>
            <person name="Capri G.R."/>
            <person name="Burnett J.R."/>
            <person name="Sudheesh P.S."/>
            <person name="Schipma M.J."/>
            <person name="Burd H."/>
            <person name="Bhattacharyya A."/>
            <person name="Rhodes L.D."/>
            <person name="Kaul R."/>
            <person name="Strom M.S."/>
        </authorList>
    </citation>
    <scope>NUCLEOTIDE SEQUENCE [LARGE SCALE GENOMIC DNA]</scope>
    <source>
        <strain>ATCC 33209 / DSM 20767 / JCM 11484 / NBRC 15589 / NCIMB 2235</strain>
    </source>
</reference>
<keyword id="KW-0963">Cytoplasm</keyword>
<keyword id="KW-0227">DNA damage</keyword>
<keyword id="KW-0228">DNA excision</keyword>
<keyword id="KW-0234">DNA repair</keyword>
<keyword id="KW-0267">Excision nuclease</keyword>
<keyword id="KW-1185">Reference proteome</keyword>
<keyword id="KW-0742">SOS response</keyword>
<protein>
    <recommendedName>
        <fullName evidence="1">UvrABC system protein C</fullName>
        <shortName evidence="1">Protein UvrC</shortName>
    </recommendedName>
    <alternativeName>
        <fullName evidence="1">Excinuclease ABC subunit C</fullName>
    </alternativeName>
</protein>
<feature type="chain" id="PRO_1000077824" description="UvrABC system protein C">
    <location>
        <begin position="1"/>
        <end position="655"/>
    </location>
</feature>
<feature type="domain" description="GIY-YIG" evidence="1">
    <location>
        <begin position="16"/>
        <end position="95"/>
    </location>
</feature>
<feature type="domain" description="UVR" evidence="1">
    <location>
        <begin position="207"/>
        <end position="242"/>
    </location>
</feature>
<dbReference type="EMBL" id="CP000910">
    <property type="protein sequence ID" value="ABY24007.1"/>
    <property type="molecule type" value="Genomic_DNA"/>
</dbReference>
<dbReference type="RefSeq" id="WP_012245672.1">
    <property type="nucleotide sequence ID" value="NC_010168.1"/>
</dbReference>
<dbReference type="SMR" id="A9WT69"/>
<dbReference type="STRING" id="288705.RSal33209_2276"/>
<dbReference type="KEGG" id="rsa:RSal33209_2276"/>
<dbReference type="eggNOG" id="COG0322">
    <property type="taxonomic scope" value="Bacteria"/>
</dbReference>
<dbReference type="HOGENOM" id="CLU_014841_1_1_11"/>
<dbReference type="Proteomes" id="UP000002007">
    <property type="component" value="Chromosome"/>
</dbReference>
<dbReference type="GO" id="GO:0005737">
    <property type="term" value="C:cytoplasm"/>
    <property type="evidence" value="ECO:0007669"/>
    <property type="project" value="UniProtKB-SubCell"/>
</dbReference>
<dbReference type="GO" id="GO:0009380">
    <property type="term" value="C:excinuclease repair complex"/>
    <property type="evidence" value="ECO:0007669"/>
    <property type="project" value="InterPro"/>
</dbReference>
<dbReference type="GO" id="GO:0003677">
    <property type="term" value="F:DNA binding"/>
    <property type="evidence" value="ECO:0007669"/>
    <property type="project" value="UniProtKB-UniRule"/>
</dbReference>
<dbReference type="GO" id="GO:0009381">
    <property type="term" value="F:excinuclease ABC activity"/>
    <property type="evidence" value="ECO:0007669"/>
    <property type="project" value="UniProtKB-UniRule"/>
</dbReference>
<dbReference type="GO" id="GO:0006289">
    <property type="term" value="P:nucleotide-excision repair"/>
    <property type="evidence" value="ECO:0007669"/>
    <property type="project" value="UniProtKB-UniRule"/>
</dbReference>
<dbReference type="GO" id="GO:0009432">
    <property type="term" value="P:SOS response"/>
    <property type="evidence" value="ECO:0007669"/>
    <property type="project" value="UniProtKB-UniRule"/>
</dbReference>
<dbReference type="CDD" id="cd10434">
    <property type="entry name" value="GIY-YIG_UvrC_Cho"/>
    <property type="match status" value="1"/>
</dbReference>
<dbReference type="FunFam" id="3.40.1440.10:FF:000001">
    <property type="entry name" value="UvrABC system protein C"/>
    <property type="match status" value="1"/>
</dbReference>
<dbReference type="Gene3D" id="1.10.150.20">
    <property type="entry name" value="5' to 3' exonuclease, C-terminal subdomain"/>
    <property type="match status" value="1"/>
</dbReference>
<dbReference type="Gene3D" id="3.40.1440.10">
    <property type="entry name" value="GIY-YIG endonuclease"/>
    <property type="match status" value="1"/>
</dbReference>
<dbReference type="Gene3D" id="4.10.860.10">
    <property type="entry name" value="UVR domain"/>
    <property type="match status" value="1"/>
</dbReference>
<dbReference type="Gene3D" id="3.30.420.340">
    <property type="entry name" value="UvrC, RNAse H endonuclease domain"/>
    <property type="match status" value="1"/>
</dbReference>
<dbReference type="HAMAP" id="MF_00203">
    <property type="entry name" value="UvrC"/>
    <property type="match status" value="1"/>
</dbReference>
<dbReference type="InterPro" id="IPR000305">
    <property type="entry name" value="GIY-YIG_endonuc"/>
</dbReference>
<dbReference type="InterPro" id="IPR035901">
    <property type="entry name" value="GIY-YIG_endonuc_sf"/>
</dbReference>
<dbReference type="InterPro" id="IPR047296">
    <property type="entry name" value="GIY-YIG_UvrC_Cho"/>
</dbReference>
<dbReference type="InterPro" id="IPR003583">
    <property type="entry name" value="Hlx-hairpin-Hlx_DNA-bd_motif"/>
</dbReference>
<dbReference type="InterPro" id="IPR010994">
    <property type="entry name" value="RuvA_2-like"/>
</dbReference>
<dbReference type="InterPro" id="IPR001943">
    <property type="entry name" value="UVR_dom"/>
</dbReference>
<dbReference type="InterPro" id="IPR036876">
    <property type="entry name" value="UVR_dom_sf"/>
</dbReference>
<dbReference type="InterPro" id="IPR050066">
    <property type="entry name" value="UvrABC_protein_C"/>
</dbReference>
<dbReference type="InterPro" id="IPR004791">
    <property type="entry name" value="UvrC"/>
</dbReference>
<dbReference type="InterPro" id="IPR001162">
    <property type="entry name" value="UvrC_RNase_H_dom"/>
</dbReference>
<dbReference type="InterPro" id="IPR038476">
    <property type="entry name" value="UvrC_RNase_H_dom_sf"/>
</dbReference>
<dbReference type="NCBIfam" id="NF001824">
    <property type="entry name" value="PRK00558.1-5"/>
    <property type="match status" value="1"/>
</dbReference>
<dbReference type="NCBIfam" id="TIGR00194">
    <property type="entry name" value="uvrC"/>
    <property type="match status" value="1"/>
</dbReference>
<dbReference type="PANTHER" id="PTHR30562:SF1">
    <property type="entry name" value="UVRABC SYSTEM PROTEIN C"/>
    <property type="match status" value="1"/>
</dbReference>
<dbReference type="PANTHER" id="PTHR30562">
    <property type="entry name" value="UVRC/OXIDOREDUCTASE"/>
    <property type="match status" value="1"/>
</dbReference>
<dbReference type="Pfam" id="PF01541">
    <property type="entry name" value="GIY-YIG"/>
    <property type="match status" value="1"/>
</dbReference>
<dbReference type="Pfam" id="PF14520">
    <property type="entry name" value="HHH_5"/>
    <property type="match status" value="1"/>
</dbReference>
<dbReference type="Pfam" id="PF02151">
    <property type="entry name" value="UVR"/>
    <property type="match status" value="1"/>
</dbReference>
<dbReference type="Pfam" id="PF22920">
    <property type="entry name" value="UvrC_RNaseH"/>
    <property type="match status" value="1"/>
</dbReference>
<dbReference type="Pfam" id="PF08459">
    <property type="entry name" value="UvrC_RNaseH_dom"/>
    <property type="match status" value="1"/>
</dbReference>
<dbReference type="SMART" id="SM00465">
    <property type="entry name" value="GIYc"/>
    <property type="match status" value="1"/>
</dbReference>
<dbReference type="SMART" id="SM00278">
    <property type="entry name" value="HhH1"/>
    <property type="match status" value="2"/>
</dbReference>
<dbReference type="SUPFAM" id="SSF46600">
    <property type="entry name" value="C-terminal UvrC-binding domain of UvrB"/>
    <property type="match status" value="1"/>
</dbReference>
<dbReference type="SUPFAM" id="SSF82771">
    <property type="entry name" value="GIY-YIG endonuclease"/>
    <property type="match status" value="1"/>
</dbReference>
<dbReference type="SUPFAM" id="SSF47781">
    <property type="entry name" value="RuvA domain 2-like"/>
    <property type="match status" value="1"/>
</dbReference>
<dbReference type="PROSITE" id="PS50164">
    <property type="entry name" value="GIY_YIG"/>
    <property type="match status" value="1"/>
</dbReference>
<dbReference type="PROSITE" id="PS50151">
    <property type="entry name" value="UVR"/>
    <property type="match status" value="1"/>
</dbReference>
<dbReference type="PROSITE" id="PS50165">
    <property type="entry name" value="UVRC"/>
    <property type="match status" value="1"/>
</dbReference>